<feature type="chain" id="PRO_0000286210" description="Spermidine/putrescine import ATP-binding protein PotA">
    <location>
        <begin position="1"/>
        <end position="352"/>
    </location>
</feature>
<feature type="domain" description="ABC transporter" evidence="1">
    <location>
        <begin position="7"/>
        <end position="237"/>
    </location>
</feature>
<feature type="binding site" evidence="1">
    <location>
        <begin position="39"/>
        <end position="46"/>
    </location>
    <ligand>
        <name>ATP</name>
        <dbReference type="ChEBI" id="CHEBI:30616"/>
    </ligand>
</feature>
<organism>
    <name type="scientific">Acetivibrio thermocellus (strain ATCC 27405 / DSM 1237 / JCM 9322 / NBRC 103400 / NCIMB 10682 / NRRL B-4536 / VPI 7372)</name>
    <name type="common">Clostridium thermocellum</name>
    <dbReference type="NCBI Taxonomy" id="203119"/>
    <lineage>
        <taxon>Bacteria</taxon>
        <taxon>Bacillati</taxon>
        <taxon>Bacillota</taxon>
        <taxon>Clostridia</taxon>
        <taxon>Eubacteriales</taxon>
        <taxon>Oscillospiraceae</taxon>
        <taxon>Acetivibrio</taxon>
    </lineage>
</organism>
<protein>
    <recommendedName>
        <fullName evidence="1">Spermidine/putrescine import ATP-binding protein PotA</fullName>
        <ecNumber evidence="1">7.6.2.11</ecNumber>
    </recommendedName>
</protein>
<dbReference type="EC" id="7.6.2.11" evidence="1"/>
<dbReference type="EMBL" id="CP000568">
    <property type="protein sequence ID" value="ABN51985.1"/>
    <property type="molecule type" value="Genomic_DNA"/>
</dbReference>
<dbReference type="RefSeq" id="WP_003516284.1">
    <property type="nucleotide sequence ID" value="NC_009012.1"/>
</dbReference>
<dbReference type="SMR" id="A3DDF6"/>
<dbReference type="STRING" id="203119.Cthe_0750"/>
<dbReference type="GeneID" id="35805587"/>
<dbReference type="KEGG" id="cth:Cthe_0750"/>
<dbReference type="eggNOG" id="COG3842">
    <property type="taxonomic scope" value="Bacteria"/>
</dbReference>
<dbReference type="HOGENOM" id="CLU_000604_1_1_9"/>
<dbReference type="OrthoDB" id="9802264at2"/>
<dbReference type="Proteomes" id="UP000002145">
    <property type="component" value="Chromosome"/>
</dbReference>
<dbReference type="GO" id="GO:0043190">
    <property type="term" value="C:ATP-binding cassette (ABC) transporter complex"/>
    <property type="evidence" value="ECO:0007669"/>
    <property type="project" value="InterPro"/>
</dbReference>
<dbReference type="GO" id="GO:0015594">
    <property type="term" value="F:ABC-type putrescine transporter activity"/>
    <property type="evidence" value="ECO:0007669"/>
    <property type="project" value="InterPro"/>
</dbReference>
<dbReference type="GO" id="GO:0005524">
    <property type="term" value="F:ATP binding"/>
    <property type="evidence" value="ECO:0007669"/>
    <property type="project" value="UniProtKB-KW"/>
</dbReference>
<dbReference type="GO" id="GO:0016887">
    <property type="term" value="F:ATP hydrolysis activity"/>
    <property type="evidence" value="ECO:0007669"/>
    <property type="project" value="InterPro"/>
</dbReference>
<dbReference type="CDD" id="cd03300">
    <property type="entry name" value="ABC_PotA_N"/>
    <property type="match status" value="1"/>
</dbReference>
<dbReference type="FunFam" id="3.40.50.300:FF:000133">
    <property type="entry name" value="Spermidine/putrescine import ATP-binding protein PotA"/>
    <property type="match status" value="1"/>
</dbReference>
<dbReference type="Gene3D" id="2.40.50.100">
    <property type="match status" value="1"/>
</dbReference>
<dbReference type="Gene3D" id="3.40.50.300">
    <property type="entry name" value="P-loop containing nucleotide triphosphate hydrolases"/>
    <property type="match status" value="1"/>
</dbReference>
<dbReference type="InterPro" id="IPR003593">
    <property type="entry name" value="AAA+_ATPase"/>
</dbReference>
<dbReference type="InterPro" id="IPR050093">
    <property type="entry name" value="ABC_SmlMolc_Importer"/>
</dbReference>
<dbReference type="InterPro" id="IPR003439">
    <property type="entry name" value="ABC_transporter-like_ATP-bd"/>
</dbReference>
<dbReference type="InterPro" id="IPR017871">
    <property type="entry name" value="ABC_transporter-like_CS"/>
</dbReference>
<dbReference type="InterPro" id="IPR008995">
    <property type="entry name" value="Mo/tungstate-bd_C_term_dom"/>
</dbReference>
<dbReference type="InterPro" id="IPR027417">
    <property type="entry name" value="P-loop_NTPase"/>
</dbReference>
<dbReference type="InterPro" id="IPR005893">
    <property type="entry name" value="PotA-like"/>
</dbReference>
<dbReference type="InterPro" id="IPR017879">
    <property type="entry name" value="PotA_ATP-bd"/>
</dbReference>
<dbReference type="InterPro" id="IPR013611">
    <property type="entry name" value="Transp-assoc_OB_typ2"/>
</dbReference>
<dbReference type="NCBIfam" id="NF043075">
    <property type="entry name" value="MMSYN1_0197"/>
    <property type="match status" value="1"/>
</dbReference>
<dbReference type="NCBIfam" id="TIGR01187">
    <property type="entry name" value="potA"/>
    <property type="match status" value="1"/>
</dbReference>
<dbReference type="PANTHER" id="PTHR42781">
    <property type="entry name" value="SPERMIDINE/PUTRESCINE IMPORT ATP-BINDING PROTEIN POTA"/>
    <property type="match status" value="1"/>
</dbReference>
<dbReference type="PANTHER" id="PTHR42781:SF4">
    <property type="entry name" value="SPERMIDINE_PUTRESCINE IMPORT ATP-BINDING PROTEIN POTA"/>
    <property type="match status" value="1"/>
</dbReference>
<dbReference type="Pfam" id="PF00005">
    <property type="entry name" value="ABC_tran"/>
    <property type="match status" value="1"/>
</dbReference>
<dbReference type="Pfam" id="PF08402">
    <property type="entry name" value="TOBE_2"/>
    <property type="match status" value="1"/>
</dbReference>
<dbReference type="SMART" id="SM00382">
    <property type="entry name" value="AAA"/>
    <property type="match status" value="1"/>
</dbReference>
<dbReference type="SUPFAM" id="SSF50331">
    <property type="entry name" value="MOP-like"/>
    <property type="match status" value="1"/>
</dbReference>
<dbReference type="SUPFAM" id="SSF52540">
    <property type="entry name" value="P-loop containing nucleoside triphosphate hydrolases"/>
    <property type="match status" value="1"/>
</dbReference>
<dbReference type="PROSITE" id="PS00211">
    <property type="entry name" value="ABC_TRANSPORTER_1"/>
    <property type="match status" value="1"/>
</dbReference>
<dbReference type="PROSITE" id="PS50893">
    <property type="entry name" value="ABC_TRANSPORTER_2"/>
    <property type="match status" value="1"/>
</dbReference>
<dbReference type="PROSITE" id="PS51305">
    <property type="entry name" value="POTA"/>
    <property type="match status" value="1"/>
</dbReference>
<gene>
    <name evidence="1" type="primary">potA</name>
    <name type="ordered locus">Cthe_0750</name>
</gene>
<keyword id="KW-0067">ATP-binding</keyword>
<keyword id="KW-1003">Cell membrane</keyword>
<keyword id="KW-0472">Membrane</keyword>
<keyword id="KW-0547">Nucleotide-binding</keyword>
<keyword id="KW-1185">Reference proteome</keyword>
<keyword id="KW-1278">Translocase</keyword>
<keyword id="KW-0813">Transport</keyword>
<reference key="1">
    <citation type="submission" date="2007-02" db="EMBL/GenBank/DDBJ databases">
        <title>Complete sequence of Clostridium thermocellum ATCC 27405.</title>
        <authorList>
            <consortium name="US DOE Joint Genome Institute"/>
            <person name="Copeland A."/>
            <person name="Lucas S."/>
            <person name="Lapidus A."/>
            <person name="Barry K."/>
            <person name="Detter J.C."/>
            <person name="Glavina del Rio T."/>
            <person name="Hammon N."/>
            <person name="Israni S."/>
            <person name="Dalin E."/>
            <person name="Tice H."/>
            <person name="Pitluck S."/>
            <person name="Chertkov O."/>
            <person name="Brettin T."/>
            <person name="Bruce D."/>
            <person name="Han C."/>
            <person name="Tapia R."/>
            <person name="Gilna P."/>
            <person name="Schmutz J."/>
            <person name="Larimer F."/>
            <person name="Land M."/>
            <person name="Hauser L."/>
            <person name="Kyrpides N."/>
            <person name="Mikhailova N."/>
            <person name="Wu J.H.D."/>
            <person name="Newcomb M."/>
            <person name="Richardson P."/>
        </authorList>
    </citation>
    <scope>NUCLEOTIDE SEQUENCE [LARGE SCALE GENOMIC DNA]</scope>
    <source>
        <strain>ATCC 27405 / DSM 1237 / JCM 9322 / NBRC 103400 / NCIMB 10682 / NRRL B-4536 / VPI 7372</strain>
    </source>
</reference>
<accession>A3DDF6</accession>
<proteinExistence type="inferred from homology"/>
<comment type="function">
    <text evidence="1">Part of the ABC transporter complex PotABCD involved in spermidine/putrescine import. Responsible for energy coupling to the transport system.</text>
</comment>
<comment type="catalytic activity">
    <reaction evidence="1">
        <text>ATP + H2O + polyamine-[polyamine-binding protein]Side 1 = ADP + phosphate + polyamineSide 2 + [polyamine-binding protein]Side 1.</text>
        <dbReference type="EC" id="7.6.2.11"/>
    </reaction>
</comment>
<comment type="subunit">
    <text evidence="1">The complex is composed of two ATP-binding proteins (PotA), two transmembrane proteins (PotB and PotC) and a solute-binding protein (PotD).</text>
</comment>
<comment type="subcellular location">
    <subcellularLocation>
        <location evidence="1">Cell membrane</location>
        <topology evidence="1">Peripheral membrane protein</topology>
    </subcellularLocation>
</comment>
<comment type="similarity">
    <text evidence="1">Belongs to the ABC transporter superfamily. Spermidine/putrescine importer (TC 3.A.1.11.1) family.</text>
</comment>
<evidence type="ECO:0000255" key="1">
    <source>
        <dbReference type="HAMAP-Rule" id="MF_01726"/>
    </source>
</evidence>
<name>POTA_ACET2</name>
<sequence length="352" mass="39826">MERNVVIRLENVTKSFDDQVVLKNLTLDVRKNEFLTLLGPSGCGKTTTLRLIGGFEKPDEGIILHHGNDISNLPPYKRNVNTVFQKYALFPHLNVYENIAFGLKIKKMNKSLIKEKVEKALRQVNLVGYENRRIDQLSGGQQQRVAIARAIVNEPEILLLDEPLGALDLKLRQEMQYELKTLQKELGITFVYVTHDQEEALTMSDTVVVMNNGVIQQKGTPEDIYNEPVNAFVADFIGESNIVEGIMRQDGVVEIFGRVYECVDKGFAVNEKVDVVIRPEDIKLLEPSENKINGQVTSCIFKGVHYETCVMTDGFEWVIHNTKSFTPGENVSINVDPFDIHIMKKMEKEAGT</sequence>